<gene>
    <name evidence="1" type="primary">tgt</name>
    <name type="ordered locus">Veis_0596</name>
</gene>
<proteinExistence type="inferred from homology"/>
<dbReference type="EC" id="2.4.2.29" evidence="1"/>
<dbReference type="EMBL" id="CP000542">
    <property type="protein sequence ID" value="ABM56379.1"/>
    <property type="molecule type" value="Genomic_DNA"/>
</dbReference>
<dbReference type="RefSeq" id="WP_011808393.1">
    <property type="nucleotide sequence ID" value="NC_008786.1"/>
</dbReference>
<dbReference type="SMR" id="A1WFH2"/>
<dbReference type="STRING" id="391735.Veis_0596"/>
<dbReference type="GeneID" id="76459298"/>
<dbReference type="KEGG" id="vei:Veis_0596"/>
<dbReference type="eggNOG" id="COG0343">
    <property type="taxonomic scope" value="Bacteria"/>
</dbReference>
<dbReference type="HOGENOM" id="CLU_022060_0_1_4"/>
<dbReference type="OrthoDB" id="9805417at2"/>
<dbReference type="UniPathway" id="UPA00392"/>
<dbReference type="Proteomes" id="UP000000374">
    <property type="component" value="Chromosome"/>
</dbReference>
<dbReference type="GO" id="GO:0005829">
    <property type="term" value="C:cytosol"/>
    <property type="evidence" value="ECO:0007669"/>
    <property type="project" value="TreeGrafter"/>
</dbReference>
<dbReference type="GO" id="GO:0046872">
    <property type="term" value="F:metal ion binding"/>
    <property type="evidence" value="ECO:0007669"/>
    <property type="project" value="UniProtKB-KW"/>
</dbReference>
<dbReference type="GO" id="GO:0008479">
    <property type="term" value="F:tRNA-guanosine(34) queuine transglycosylase activity"/>
    <property type="evidence" value="ECO:0007669"/>
    <property type="project" value="UniProtKB-UniRule"/>
</dbReference>
<dbReference type="GO" id="GO:0008616">
    <property type="term" value="P:queuosine biosynthetic process"/>
    <property type="evidence" value="ECO:0007669"/>
    <property type="project" value="UniProtKB-UniRule"/>
</dbReference>
<dbReference type="GO" id="GO:0002099">
    <property type="term" value="P:tRNA wobble guanine modification"/>
    <property type="evidence" value="ECO:0007669"/>
    <property type="project" value="TreeGrafter"/>
</dbReference>
<dbReference type="GO" id="GO:0101030">
    <property type="term" value="P:tRNA-guanine transglycosylation"/>
    <property type="evidence" value="ECO:0007669"/>
    <property type="project" value="InterPro"/>
</dbReference>
<dbReference type="FunFam" id="3.20.20.105:FF:000001">
    <property type="entry name" value="Queuine tRNA-ribosyltransferase"/>
    <property type="match status" value="1"/>
</dbReference>
<dbReference type="Gene3D" id="3.20.20.105">
    <property type="entry name" value="Queuine tRNA-ribosyltransferase-like"/>
    <property type="match status" value="1"/>
</dbReference>
<dbReference type="HAMAP" id="MF_00168">
    <property type="entry name" value="Q_tRNA_Tgt"/>
    <property type="match status" value="1"/>
</dbReference>
<dbReference type="InterPro" id="IPR050076">
    <property type="entry name" value="ArchSynthase1/Queuine_TRR"/>
</dbReference>
<dbReference type="InterPro" id="IPR004803">
    <property type="entry name" value="TGT"/>
</dbReference>
<dbReference type="InterPro" id="IPR036511">
    <property type="entry name" value="TGT-like_sf"/>
</dbReference>
<dbReference type="InterPro" id="IPR002616">
    <property type="entry name" value="tRNA_ribo_trans-like"/>
</dbReference>
<dbReference type="NCBIfam" id="TIGR00430">
    <property type="entry name" value="Q_tRNA_tgt"/>
    <property type="match status" value="1"/>
</dbReference>
<dbReference type="NCBIfam" id="TIGR00449">
    <property type="entry name" value="tgt_general"/>
    <property type="match status" value="1"/>
</dbReference>
<dbReference type="PANTHER" id="PTHR46499">
    <property type="entry name" value="QUEUINE TRNA-RIBOSYLTRANSFERASE"/>
    <property type="match status" value="1"/>
</dbReference>
<dbReference type="PANTHER" id="PTHR46499:SF1">
    <property type="entry name" value="QUEUINE TRNA-RIBOSYLTRANSFERASE"/>
    <property type="match status" value="1"/>
</dbReference>
<dbReference type="Pfam" id="PF01702">
    <property type="entry name" value="TGT"/>
    <property type="match status" value="1"/>
</dbReference>
<dbReference type="SUPFAM" id="SSF51713">
    <property type="entry name" value="tRNA-guanine transglycosylase"/>
    <property type="match status" value="1"/>
</dbReference>
<organism>
    <name type="scientific">Verminephrobacter eiseniae (strain EF01-2)</name>
    <dbReference type="NCBI Taxonomy" id="391735"/>
    <lineage>
        <taxon>Bacteria</taxon>
        <taxon>Pseudomonadati</taxon>
        <taxon>Pseudomonadota</taxon>
        <taxon>Betaproteobacteria</taxon>
        <taxon>Burkholderiales</taxon>
        <taxon>Comamonadaceae</taxon>
        <taxon>Verminephrobacter</taxon>
    </lineage>
</organism>
<reference key="1">
    <citation type="submission" date="2006-12" db="EMBL/GenBank/DDBJ databases">
        <title>Complete sequence of chromosome 1 of Verminephrobacter eiseniae EF01-2.</title>
        <authorList>
            <person name="Copeland A."/>
            <person name="Lucas S."/>
            <person name="Lapidus A."/>
            <person name="Barry K."/>
            <person name="Detter J.C."/>
            <person name="Glavina del Rio T."/>
            <person name="Dalin E."/>
            <person name="Tice H."/>
            <person name="Pitluck S."/>
            <person name="Chertkov O."/>
            <person name="Brettin T."/>
            <person name="Bruce D."/>
            <person name="Han C."/>
            <person name="Tapia R."/>
            <person name="Gilna P."/>
            <person name="Schmutz J."/>
            <person name="Larimer F."/>
            <person name="Land M."/>
            <person name="Hauser L."/>
            <person name="Kyrpides N."/>
            <person name="Kim E."/>
            <person name="Stahl D."/>
            <person name="Richardson P."/>
        </authorList>
    </citation>
    <scope>NUCLEOTIDE SEQUENCE [LARGE SCALE GENOMIC DNA]</scope>
    <source>
        <strain>EF01-2</strain>
    </source>
</reference>
<comment type="function">
    <text evidence="1">Catalyzes the base-exchange of a guanine (G) residue with the queuine precursor 7-aminomethyl-7-deazaguanine (PreQ1) at position 34 (anticodon wobble position) in tRNAs with GU(N) anticodons (tRNA-Asp, -Asn, -His and -Tyr). Catalysis occurs through a double-displacement mechanism. The nucleophile active site attacks the C1' of nucleotide 34 to detach the guanine base from the RNA, forming a covalent enzyme-RNA intermediate. The proton acceptor active site deprotonates the incoming PreQ1, allowing a nucleophilic attack on the C1' of the ribose to form the product. After dissociation, two additional enzymatic reactions on the tRNA convert PreQ1 to queuine (Q), resulting in the hypermodified nucleoside queuosine (7-(((4,5-cis-dihydroxy-2-cyclopenten-1-yl)amino)methyl)-7-deazaguanosine).</text>
</comment>
<comment type="catalytic activity">
    <reaction evidence="1">
        <text>7-aminomethyl-7-carbaguanine + guanosine(34) in tRNA = 7-aminomethyl-7-carbaguanosine(34) in tRNA + guanine</text>
        <dbReference type="Rhea" id="RHEA:24104"/>
        <dbReference type="Rhea" id="RHEA-COMP:10341"/>
        <dbReference type="Rhea" id="RHEA-COMP:10342"/>
        <dbReference type="ChEBI" id="CHEBI:16235"/>
        <dbReference type="ChEBI" id="CHEBI:58703"/>
        <dbReference type="ChEBI" id="CHEBI:74269"/>
        <dbReference type="ChEBI" id="CHEBI:82833"/>
        <dbReference type="EC" id="2.4.2.29"/>
    </reaction>
</comment>
<comment type="cofactor">
    <cofactor evidence="1">
        <name>Zn(2+)</name>
        <dbReference type="ChEBI" id="CHEBI:29105"/>
    </cofactor>
    <text evidence="1">Binds 1 zinc ion per subunit.</text>
</comment>
<comment type="pathway">
    <text evidence="1">tRNA modification; tRNA-queuosine biosynthesis.</text>
</comment>
<comment type="subunit">
    <text evidence="1">Homodimer. Within each dimer, one monomer is responsible for RNA recognition and catalysis, while the other monomer binds to the replacement base PreQ1.</text>
</comment>
<comment type="similarity">
    <text evidence="1">Belongs to the queuine tRNA-ribosyltransferase family.</text>
</comment>
<evidence type="ECO:0000255" key="1">
    <source>
        <dbReference type="HAMAP-Rule" id="MF_00168"/>
    </source>
</evidence>
<sequence length="390" mass="43235">MLQFDLLTTDPASHARRGRLTLRHGQVQTPIFMPVGTHGSVKGVLPRSLHEMGAQIILGNTFHLWLRPGLAVLQGFGGLHGFEKWNKPILTDSGGFQVWSLGALRTITEEGVHFASPVNGDKLFLSPEVSMQIQTTLDSDIVMQLDECTPYETRGQRTTERAACQSMQMSLRWAKRSQDEFQRLNNPNALFGIVQGGMYENLRAESLAALAAMDLPGYAIGGVSVGEPKDEMLRIMAHTPHRLPAHKPRYLMGVGTPEDLVEGVAQGVDMFDCVMPTRNARNGTLFTRFGDLKIRNARHKTDPQPLDGSCTCYTCAGPSGVAWDQGGRDGFSRAYLHHLERCGEMLGPMLSTVHNLHYYLNLMREIRQALDAGEFTQLRARLKADRARGV</sequence>
<protein>
    <recommendedName>
        <fullName evidence="1">Queuine tRNA-ribosyltransferase</fullName>
        <ecNumber evidence="1">2.4.2.29</ecNumber>
    </recommendedName>
    <alternativeName>
        <fullName evidence="1">Guanine insertion enzyme</fullName>
    </alternativeName>
    <alternativeName>
        <fullName evidence="1">tRNA-guanine transglycosylase</fullName>
    </alternativeName>
</protein>
<name>TGT_VEREI</name>
<accession>A1WFH2</accession>
<feature type="chain" id="PRO_1000058289" description="Queuine tRNA-ribosyltransferase">
    <location>
        <begin position="1"/>
        <end position="390"/>
    </location>
</feature>
<feature type="region of interest" description="RNA binding" evidence="1">
    <location>
        <begin position="253"/>
        <end position="259"/>
    </location>
</feature>
<feature type="region of interest" description="RNA binding; important for wobble base 34 recognition" evidence="1">
    <location>
        <begin position="277"/>
        <end position="281"/>
    </location>
</feature>
<feature type="active site" description="Proton acceptor" evidence="1">
    <location>
        <position position="92"/>
    </location>
</feature>
<feature type="active site" description="Nucleophile" evidence="1">
    <location>
        <position position="272"/>
    </location>
</feature>
<feature type="binding site" evidence="1">
    <location>
        <begin position="92"/>
        <end position="96"/>
    </location>
    <ligand>
        <name>substrate</name>
    </ligand>
</feature>
<feature type="binding site" evidence="1">
    <location>
        <position position="146"/>
    </location>
    <ligand>
        <name>substrate</name>
    </ligand>
</feature>
<feature type="binding site" evidence="1">
    <location>
        <position position="195"/>
    </location>
    <ligand>
        <name>substrate</name>
    </ligand>
</feature>
<feature type="binding site" evidence="1">
    <location>
        <position position="222"/>
    </location>
    <ligand>
        <name>substrate</name>
    </ligand>
</feature>
<feature type="binding site" evidence="1">
    <location>
        <position position="310"/>
    </location>
    <ligand>
        <name>Zn(2+)</name>
        <dbReference type="ChEBI" id="CHEBI:29105"/>
    </ligand>
</feature>
<feature type="binding site" evidence="1">
    <location>
        <position position="312"/>
    </location>
    <ligand>
        <name>Zn(2+)</name>
        <dbReference type="ChEBI" id="CHEBI:29105"/>
    </ligand>
</feature>
<feature type="binding site" evidence="1">
    <location>
        <position position="315"/>
    </location>
    <ligand>
        <name>Zn(2+)</name>
        <dbReference type="ChEBI" id="CHEBI:29105"/>
    </ligand>
</feature>
<feature type="binding site" evidence="1">
    <location>
        <position position="354"/>
    </location>
    <ligand>
        <name>Zn(2+)</name>
        <dbReference type="ChEBI" id="CHEBI:29105"/>
    </ligand>
</feature>
<keyword id="KW-0328">Glycosyltransferase</keyword>
<keyword id="KW-0479">Metal-binding</keyword>
<keyword id="KW-0671">Queuosine biosynthesis</keyword>
<keyword id="KW-1185">Reference proteome</keyword>
<keyword id="KW-0808">Transferase</keyword>
<keyword id="KW-0819">tRNA processing</keyword>
<keyword id="KW-0862">Zinc</keyword>